<keyword id="KW-0963">Cytoplasm</keyword>
<keyword id="KW-0488">Methylation</keyword>
<keyword id="KW-0648">Protein biosynthesis</keyword>
<keyword id="KW-1185">Reference proteome</keyword>
<dbReference type="EMBL" id="CU928145">
    <property type="protein sequence ID" value="CAU99134.1"/>
    <property type="molecule type" value="Genomic_DNA"/>
</dbReference>
<dbReference type="RefSeq" id="WP_001701073.1">
    <property type="nucleotide sequence ID" value="NZ_CP028304.1"/>
</dbReference>
<dbReference type="SMR" id="B7LF76"/>
<dbReference type="GeneID" id="93779111"/>
<dbReference type="KEGG" id="eck:EC55989_3177"/>
<dbReference type="HOGENOM" id="CLU_220733_1_0_6"/>
<dbReference type="Proteomes" id="UP000000746">
    <property type="component" value="Chromosome"/>
</dbReference>
<dbReference type="GO" id="GO:0005737">
    <property type="term" value="C:cytoplasm"/>
    <property type="evidence" value="ECO:0007669"/>
    <property type="project" value="UniProtKB-SubCell"/>
</dbReference>
<dbReference type="GO" id="GO:0016149">
    <property type="term" value="F:translation release factor activity, codon specific"/>
    <property type="evidence" value="ECO:0007669"/>
    <property type="project" value="UniProtKB-UniRule"/>
</dbReference>
<dbReference type="FunFam" id="1.20.58.410:FF:000001">
    <property type="entry name" value="Peptide chain release factor 2"/>
    <property type="match status" value="1"/>
</dbReference>
<dbReference type="FunFam" id="3.30.160.20:FF:000010">
    <property type="entry name" value="Peptide chain release factor 2"/>
    <property type="match status" value="1"/>
</dbReference>
<dbReference type="Gene3D" id="3.30.160.20">
    <property type="match status" value="1"/>
</dbReference>
<dbReference type="Gene3D" id="3.30.70.1660">
    <property type="match status" value="1"/>
</dbReference>
<dbReference type="Gene3D" id="1.20.58.410">
    <property type="entry name" value="Release factor"/>
    <property type="match status" value="1"/>
</dbReference>
<dbReference type="HAMAP" id="MF_00094">
    <property type="entry name" value="Rel_fac_2"/>
    <property type="match status" value="1"/>
</dbReference>
<dbReference type="InterPro" id="IPR005139">
    <property type="entry name" value="PCRF"/>
</dbReference>
<dbReference type="InterPro" id="IPR000352">
    <property type="entry name" value="Pep_chain_release_fac_I"/>
</dbReference>
<dbReference type="InterPro" id="IPR045853">
    <property type="entry name" value="Pep_chain_release_fac_I_sf"/>
</dbReference>
<dbReference type="InterPro" id="IPR004374">
    <property type="entry name" value="PrfB"/>
</dbReference>
<dbReference type="NCBIfam" id="TIGR00020">
    <property type="entry name" value="prfB"/>
    <property type="match status" value="1"/>
</dbReference>
<dbReference type="PANTHER" id="PTHR43116:SF3">
    <property type="entry name" value="CLASS I PEPTIDE CHAIN RELEASE FACTOR"/>
    <property type="match status" value="1"/>
</dbReference>
<dbReference type="PANTHER" id="PTHR43116">
    <property type="entry name" value="PEPTIDE CHAIN RELEASE FACTOR 2"/>
    <property type="match status" value="1"/>
</dbReference>
<dbReference type="Pfam" id="PF03462">
    <property type="entry name" value="PCRF"/>
    <property type="match status" value="1"/>
</dbReference>
<dbReference type="Pfam" id="PF00472">
    <property type="entry name" value="RF-1"/>
    <property type="match status" value="1"/>
</dbReference>
<dbReference type="SMART" id="SM00937">
    <property type="entry name" value="PCRF"/>
    <property type="match status" value="1"/>
</dbReference>
<dbReference type="SUPFAM" id="SSF75620">
    <property type="entry name" value="Release factor"/>
    <property type="match status" value="1"/>
</dbReference>
<dbReference type="PROSITE" id="PS00745">
    <property type="entry name" value="RF_PROK_I"/>
    <property type="match status" value="1"/>
</dbReference>
<comment type="function">
    <text evidence="1">Peptide chain release factor 2 directs the termination of translation in response to the peptide chain termination codons UGA and UAA.</text>
</comment>
<comment type="subcellular location">
    <subcellularLocation>
        <location evidence="1">Cytoplasm</location>
    </subcellularLocation>
</comment>
<comment type="PTM">
    <text evidence="1">Methylated by PrmC. Methylation increases the termination efficiency of RF2.</text>
</comment>
<comment type="similarity">
    <text evidence="1">Belongs to the prokaryotic/mitochondrial release factor family.</text>
</comment>
<protein>
    <recommendedName>
        <fullName evidence="1">Peptide chain release factor 2</fullName>
        <shortName evidence="1">RF-2</shortName>
    </recommendedName>
</protein>
<organism>
    <name type="scientific">Escherichia coli (strain 55989 / EAEC)</name>
    <dbReference type="NCBI Taxonomy" id="585055"/>
    <lineage>
        <taxon>Bacteria</taxon>
        <taxon>Pseudomonadati</taxon>
        <taxon>Pseudomonadota</taxon>
        <taxon>Gammaproteobacteria</taxon>
        <taxon>Enterobacterales</taxon>
        <taxon>Enterobacteriaceae</taxon>
        <taxon>Escherichia</taxon>
    </lineage>
</organism>
<accession>B7LF76</accession>
<gene>
    <name evidence="1" type="primary">prfB</name>
    <name type="ordered locus">EC55989_3177</name>
</gene>
<sequence length="365" mass="41221">MFEINPVNNRIQDLTERSDVLRGYLDYDAKKERLEEVNAELEQPDVWNEPERAQALGKERSSLEAVVDTLDQMKQGLEDVSGLLELAVEADDEETFNEAVAELDALEEKLAQLEFRRMFSGEYDSADCYLDIQAGSGGTEAQDWASMLERMYLRWAESRGFKTEIIEESEGEVAGIKSVTIKISGDYAYGWLRTETGVHRLVRKSPFDSGGRRHTSFSSAFVYPEVDDDIDIEINPADLRIDVYRASGAGGQHVNRTESAVRITHIPTGIVTQCQNDRSQHKNKDQAMKQMKAKLYELEMQKKNAEKQAMEDNKSDIGWGSQIRSYVLDDSRIKDLRTGVETRNTQAVLDGSLDQFIEASLKAGL</sequence>
<proteinExistence type="inferred from homology"/>
<feature type="chain" id="PRO_1000193552" description="Peptide chain release factor 2">
    <location>
        <begin position="1"/>
        <end position="365"/>
    </location>
</feature>
<feature type="modified residue" description="N5-methylglutamine" evidence="1">
    <location>
        <position position="252"/>
    </location>
</feature>
<evidence type="ECO:0000255" key="1">
    <source>
        <dbReference type="HAMAP-Rule" id="MF_00094"/>
    </source>
</evidence>
<reference key="1">
    <citation type="journal article" date="2009" name="PLoS Genet.">
        <title>Organised genome dynamics in the Escherichia coli species results in highly diverse adaptive paths.</title>
        <authorList>
            <person name="Touchon M."/>
            <person name="Hoede C."/>
            <person name="Tenaillon O."/>
            <person name="Barbe V."/>
            <person name="Baeriswyl S."/>
            <person name="Bidet P."/>
            <person name="Bingen E."/>
            <person name="Bonacorsi S."/>
            <person name="Bouchier C."/>
            <person name="Bouvet O."/>
            <person name="Calteau A."/>
            <person name="Chiapello H."/>
            <person name="Clermont O."/>
            <person name="Cruveiller S."/>
            <person name="Danchin A."/>
            <person name="Diard M."/>
            <person name="Dossat C."/>
            <person name="Karoui M.E."/>
            <person name="Frapy E."/>
            <person name="Garry L."/>
            <person name="Ghigo J.M."/>
            <person name="Gilles A.M."/>
            <person name="Johnson J."/>
            <person name="Le Bouguenec C."/>
            <person name="Lescat M."/>
            <person name="Mangenot S."/>
            <person name="Martinez-Jehanne V."/>
            <person name="Matic I."/>
            <person name="Nassif X."/>
            <person name="Oztas S."/>
            <person name="Petit M.A."/>
            <person name="Pichon C."/>
            <person name="Rouy Z."/>
            <person name="Ruf C.S."/>
            <person name="Schneider D."/>
            <person name="Tourret J."/>
            <person name="Vacherie B."/>
            <person name="Vallenet D."/>
            <person name="Medigue C."/>
            <person name="Rocha E.P.C."/>
            <person name="Denamur E."/>
        </authorList>
    </citation>
    <scope>NUCLEOTIDE SEQUENCE [LARGE SCALE GENOMIC DNA]</scope>
    <source>
        <strain>55989 / EAEC</strain>
    </source>
</reference>
<name>RF2_ECO55</name>